<reference key="1">
    <citation type="submission" date="2007-08" db="EMBL/GenBank/DDBJ databases">
        <authorList>
            <consortium name="The Citrobacter koseri Genome Sequencing Project"/>
            <person name="McClelland M."/>
            <person name="Sanderson E.K."/>
            <person name="Porwollik S."/>
            <person name="Spieth J."/>
            <person name="Clifton W.S."/>
            <person name="Latreille P."/>
            <person name="Courtney L."/>
            <person name="Wang C."/>
            <person name="Pepin K."/>
            <person name="Bhonagiri V."/>
            <person name="Nash W."/>
            <person name="Johnson M."/>
            <person name="Thiruvilangam P."/>
            <person name="Wilson R."/>
        </authorList>
    </citation>
    <scope>NUCLEOTIDE SEQUENCE [LARGE SCALE GENOMIC DNA]</scope>
    <source>
        <strain>ATCC BAA-895 / CDC 4225-83 / SGSC4696</strain>
    </source>
</reference>
<name>TRMJ_CITK8</name>
<gene>
    <name type="primary">trmJ</name>
    <name type="ordered locus">CKO_00249</name>
</gene>
<evidence type="ECO:0000250" key="1">
    <source>
        <dbReference type="UniProtKB" id="P0AE01"/>
    </source>
</evidence>
<evidence type="ECO:0000305" key="2"/>
<accession>A8AD50</accession>
<organism>
    <name type="scientific">Citrobacter koseri (strain ATCC BAA-895 / CDC 4225-83 / SGSC4696)</name>
    <dbReference type="NCBI Taxonomy" id="290338"/>
    <lineage>
        <taxon>Bacteria</taxon>
        <taxon>Pseudomonadati</taxon>
        <taxon>Pseudomonadota</taxon>
        <taxon>Gammaproteobacteria</taxon>
        <taxon>Enterobacterales</taxon>
        <taxon>Enterobacteriaceae</taxon>
        <taxon>Citrobacter</taxon>
    </lineage>
</organism>
<dbReference type="EC" id="2.1.1.200" evidence="1"/>
<dbReference type="EMBL" id="CP000822">
    <property type="protein sequence ID" value="ABV11413.1"/>
    <property type="molecule type" value="Genomic_DNA"/>
</dbReference>
<dbReference type="RefSeq" id="WP_012131245.1">
    <property type="nucleotide sequence ID" value="NC_009792.1"/>
</dbReference>
<dbReference type="SMR" id="A8AD50"/>
<dbReference type="STRING" id="290338.CKO_00249"/>
<dbReference type="GeneID" id="45134532"/>
<dbReference type="KEGG" id="cko:CKO_00249"/>
<dbReference type="HOGENOM" id="CLU_056931_0_1_6"/>
<dbReference type="OrthoDB" id="9806346at2"/>
<dbReference type="Proteomes" id="UP000008148">
    <property type="component" value="Chromosome"/>
</dbReference>
<dbReference type="GO" id="GO:0005829">
    <property type="term" value="C:cytosol"/>
    <property type="evidence" value="ECO:0007669"/>
    <property type="project" value="TreeGrafter"/>
</dbReference>
<dbReference type="GO" id="GO:0003723">
    <property type="term" value="F:RNA binding"/>
    <property type="evidence" value="ECO:0007669"/>
    <property type="project" value="InterPro"/>
</dbReference>
<dbReference type="GO" id="GO:0160206">
    <property type="term" value="F:tRNA (cytidine(32)/uridine(32)-2'-O)-methyltransferase activity"/>
    <property type="evidence" value="ECO:0007669"/>
    <property type="project" value="UniProtKB-EC"/>
</dbReference>
<dbReference type="GO" id="GO:0002128">
    <property type="term" value="P:tRNA nucleoside ribose methylation"/>
    <property type="evidence" value="ECO:0007669"/>
    <property type="project" value="TreeGrafter"/>
</dbReference>
<dbReference type="CDD" id="cd18093">
    <property type="entry name" value="SpoU-like_TrmJ"/>
    <property type="match status" value="1"/>
</dbReference>
<dbReference type="FunFam" id="1.10.8.590:FF:000001">
    <property type="entry name" value="tRNA:Cm32/Um32 methyltransferase"/>
    <property type="match status" value="1"/>
</dbReference>
<dbReference type="FunFam" id="3.40.1280.10:FF:000006">
    <property type="entry name" value="Uncharacterized tRNA/rRNA methyltransferase HI_0380"/>
    <property type="match status" value="1"/>
</dbReference>
<dbReference type="Gene3D" id="1.10.8.590">
    <property type="match status" value="1"/>
</dbReference>
<dbReference type="Gene3D" id="3.40.1280.10">
    <property type="match status" value="1"/>
</dbReference>
<dbReference type="InterPro" id="IPR029028">
    <property type="entry name" value="Alpha/beta_knot_MTases"/>
</dbReference>
<dbReference type="InterPro" id="IPR004384">
    <property type="entry name" value="RNA_MeTrfase_TrmJ/LasT"/>
</dbReference>
<dbReference type="InterPro" id="IPR001537">
    <property type="entry name" value="SpoU_MeTrfase"/>
</dbReference>
<dbReference type="InterPro" id="IPR029026">
    <property type="entry name" value="tRNA_m1G_MTases_N"/>
</dbReference>
<dbReference type="NCBIfam" id="NF011694">
    <property type="entry name" value="PRK15114.1"/>
    <property type="match status" value="1"/>
</dbReference>
<dbReference type="NCBIfam" id="TIGR00050">
    <property type="entry name" value="rRNA_methyl_1"/>
    <property type="match status" value="1"/>
</dbReference>
<dbReference type="PANTHER" id="PTHR42786:SF2">
    <property type="entry name" value="TRNA (CYTIDINE_URIDINE-2'-O-)-METHYLTRANSFERASE TRMJ"/>
    <property type="match status" value="1"/>
</dbReference>
<dbReference type="PANTHER" id="PTHR42786">
    <property type="entry name" value="TRNA/RRNA METHYLTRANSFERASE"/>
    <property type="match status" value="1"/>
</dbReference>
<dbReference type="Pfam" id="PF00588">
    <property type="entry name" value="SpoU_methylase"/>
    <property type="match status" value="1"/>
</dbReference>
<dbReference type="PIRSF" id="PIRSF004808">
    <property type="entry name" value="LasT"/>
    <property type="match status" value="1"/>
</dbReference>
<dbReference type="SUPFAM" id="SSF75217">
    <property type="entry name" value="alpha/beta knot"/>
    <property type="match status" value="1"/>
</dbReference>
<protein>
    <recommendedName>
        <fullName evidence="1">tRNA (cytidine/uridine-2'-O-)-methyltransferase TrmJ</fullName>
        <ecNumber evidence="1">2.1.1.200</ecNumber>
    </recommendedName>
    <alternativeName>
        <fullName evidence="1">tRNA (cytidine(32)/uridine(32)-2'-O)-methyltransferase</fullName>
    </alternativeName>
    <alternativeName>
        <fullName evidence="1">tRNA Cm32/Um32 methyltransferase</fullName>
    </alternativeName>
</protein>
<proteinExistence type="inferred from homology"/>
<keyword id="KW-0963">Cytoplasm</keyword>
<keyword id="KW-0489">Methyltransferase</keyword>
<keyword id="KW-1185">Reference proteome</keyword>
<keyword id="KW-0949">S-adenosyl-L-methionine</keyword>
<keyword id="KW-0808">Transferase</keyword>
<keyword id="KW-0819">tRNA processing</keyword>
<sequence length="243" mass="26687">MLQNIRIVLVETSHTGNMGSVARAMKTMGLTNLWLVNPLVKPDSQAIALAAGASDVIGNAQIVDTLDDALAGCSLVVGTSARSRTLPWPMLDPRECGLKSVAEAVNTPVALVFGRERVGLTNDELQKCHYHVAIAANPEYSSLNLAMAVQVIAYEVRMAWLATQENDETAEHEETPYPLVDDLERFYGHLEQTLLSTGFIREGHPGQVMNKLRRLFTRARPESQELNILRGILASIEQQNKGK</sequence>
<feature type="chain" id="PRO_0000313851" description="tRNA (cytidine/uridine-2'-O-)-methyltransferase TrmJ">
    <location>
        <begin position="1"/>
        <end position="243"/>
    </location>
</feature>
<feature type="binding site" evidence="1">
    <location>
        <begin position="79"/>
        <end position="81"/>
    </location>
    <ligand>
        <name>S-adenosyl-L-methionine</name>
        <dbReference type="ChEBI" id="CHEBI:59789"/>
    </ligand>
</feature>
<feature type="binding site" evidence="1">
    <location>
        <position position="114"/>
    </location>
    <ligand>
        <name>S-adenosyl-L-methionine</name>
        <dbReference type="ChEBI" id="CHEBI:59789"/>
    </ligand>
</feature>
<feature type="binding site" evidence="1">
    <location>
        <position position="134"/>
    </location>
    <ligand>
        <name>S-adenosyl-L-methionine</name>
        <dbReference type="ChEBI" id="CHEBI:59789"/>
    </ligand>
</feature>
<feature type="binding site" evidence="1">
    <location>
        <begin position="141"/>
        <end position="143"/>
    </location>
    <ligand>
        <name>S-adenosyl-L-methionine</name>
        <dbReference type="ChEBI" id="CHEBI:59789"/>
    </ligand>
</feature>
<comment type="function">
    <text evidence="1">Catalyzes the formation of 2'O-methylated cytidine (Cm32) or 2'O-methylated uridine (Um32) at position 32 in tRNA.</text>
</comment>
<comment type="catalytic activity">
    <reaction evidence="1">
        <text>cytidine(32) in tRNA + S-adenosyl-L-methionine = 2'-O-methylcytidine(32) in tRNA + S-adenosyl-L-homocysteine + H(+)</text>
        <dbReference type="Rhea" id="RHEA:42932"/>
        <dbReference type="Rhea" id="RHEA-COMP:10288"/>
        <dbReference type="Rhea" id="RHEA-COMP:10289"/>
        <dbReference type="ChEBI" id="CHEBI:15378"/>
        <dbReference type="ChEBI" id="CHEBI:57856"/>
        <dbReference type="ChEBI" id="CHEBI:59789"/>
        <dbReference type="ChEBI" id="CHEBI:74495"/>
        <dbReference type="ChEBI" id="CHEBI:82748"/>
        <dbReference type="EC" id="2.1.1.200"/>
    </reaction>
</comment>
<comment type="catalytic activity">
    <reaction evidence="1">
        <text>uridine(32) in tRNA + S-adenosyl-L-methionine = 2'-O-methyluridine(32) in tRNA + S-adenosyl-L-homocysteine + H(+)</text>
        <dbReference type="Rhea" id="RHEA:42936"/>
        <dbReference type="Rhea" id="RHEA-COMP:10107"/>
        <dbReference type="Rhea" id="RHEA-COMP:10290"/>
        <dbReference type="ChEBI" id="CHEBI:15378"/>
        <dbReference type="ChEBI" id="CHEBI:57856"/>
        <dbReference type="ChEBI" id="CHEBI:59789"/>
        <dbReference type="ChEBI" id="CHEBI:65315"/>
        <dbReference type="ChEBI" id="CHEBI:74478"/>
        <dbReference type="EC" id="2.1.1.200"/>
    </reaction>
</comment>
<comment type="subunit">
    <text evidence="1">Homodimer.</text>
</comment>
<comment type="subcellular location">
    <subcellularLocation>
        <location evidence="1">Cytoplasm</location>
    </subcellularLocation>
</comment>
<comment type="similarity">
    <text evidence="2">Belongs to the class IV-like SAM-binding methyltransferase superfamily. RNA methyltransferase TrmH family.</text>
</comment>